<gene>
    <name evidence="1" type="primary">carB</name>
    <name type="ordered locus">CLK_1227</name>
</gene>
<protein>
    <recommendedName>
        <fullName evidence="1">Carbamoyl phosphate synthase large chain</fullName>
        <ecNumber evidence="1">6.3.4.16</ecNumber>
        <ecNumber evidence="1">6.3.5.5</ecNumber>
    </recommendedName>
    <alternativeName>
        <fullName evidence="1">Carbamoyl phosphate synthetase ammonia chain</fullName>
    </alternativeName>
</protein>
<proteinExistence type="inferred from homology"/>
<comment type="function">
    <text evidence="1">Large subunit of the glutamine-dependent carbamoyl phosphate synthetase (CPSase). CPSase catalyzes the formation of carbamoyl phosphate from the ammonia moiety of glutamine, carbonate, and phosphate donated by ATP, constituting the first step of 2 biosynthetic pathways, one leading to arginine and/or urea and the other to pyrimidine nucleotides. The large subunit (synthetase) binds the substrates ammonia (free or transferred from glutamine from the small subunit), hydrogencarbonate and ATP and carries out an ATP-coupled ligase reaction, activating hydrogencarbonate by forming carboxy phosphate which reacts with ammonia to form carbamoyl phosphate.</text>
</comment>
<comment type="catalytic activity">
    <reaction evidence="1">
        <text>hydrogencarbonate + L-glutamine + 2 ATP + H2O = carbamoyl phosphate + L-glutamate + 2 ADP + phosphate + 2 H(+)</text>
        <dbReference type="Rhea" id="RHEA:18633"/>
        <dbReference type="ChEBI" id="CHEBI:15377"/>
        <dbReference type="ChEBI" id="CHEBI:15378"/>
        <dbReference type="ChEBI" id="CHEBI:17544"/>
        <dbReference type="ChEBI" id="CHEBI:29985"/>
        <dbReference type="ChEBI" id="CHEBI:30616"/>
        <dbReference type="ChEBI" id="CHEBI:43474"/>
        <dbReference type="ChEBI" id="CHEBI:58228"/>
        <dbReference type="ChEBI" id="CHEBI:58359"/>
        <dbReference type="ChEBI" id="CHEBI:456216"/>
        <dbReference type="EC" id="6.3.5.5"/>
    </reaction>
</comment>
<comment type="catalytic activity">
    <molecule>Carbamoyl phosphate synthase large chain</molecule>
    <reaction evidence="1">
        <text>hydrogencarbonate + NH4(+) + 2 ATP = carbamoyl phosphate + 2 ADP + phosphate + 2 H(+)</text>
        <dbReference type="Rhea" id="RHEA:18029"/>
        <dbReference type="ChEBI" id="CHEBI:15378"/>
        <dbReference type="ChEBI" id="CHEBI:17544"/>
        <dbReference type="ChEBI" id="CHEBI:28938"/>
        <dbReference type="ChEBI" id="CHEBI:30616"/>
        <dbReference type="ChEBI" id="CHEBI:43474"/>
        <dbReference type="ChEBI" id="CHEBI:58228"/>
        <dbReference type="ChEBI" id="CHEBI:456216"/>
        <dbReference type="EC" id="6.3.4.16"/>
    </reaction>
</comment>
<comment type="cofactor">
    <cofactor evidence="1">
        <name>Mg(2+)</name>
        <dbReference type="ChEBI" id="CHEBI:18420"/>
    </cofactor>
    <cofactor evidence="1">
        <name>Mn(2+)</name>
        <dbReference type="ChEBI" id="CHEBI:29035"/>
    </cofactor>
    <text evidence="1">Binds 4 Mg(2+) or Mn(2+) ions per subunit.</text>
</comment>
<comment type="pathway">
    <text evidence="1">Amino-acid biosynthesis; L-arginine biosynthesis; carbamoyl phosphate from bicarbonate: step 1/1.</text>
</comment>
<comment type="pathway">
    <text evidence="1">Pyrimidine metabolism; UMP biosynthesis via de novo pathway; (S)-dihydroorotate from bicarbonate: step 1/3.</text>
</comment>
<comment type="subunit">
    <text evidence="1">Composed of two chains; the small (or glutamine) chain promotes the hydrolysis of glutamine to ammonia, which is used by the large (or ammonia) chain to synthesize carbamoyl phosphate. Tetramer of heterodimers (alpha,beta)4.</text>
</comment>
<comment type="domain">
    <text evidence="1">The large subunit is composed of 2 ATP-grasp domains that are involved in binding the 2 ATP molecules needed for carbamoyl phosphate synthesis. The N-terminal ATP-grasp domain (referred to as the carboxyphosphate synthetic component) catalyzes the ATP-dependent phosphorylation of hydrogencarbonate to carboxyphosphate and the subsequent nucleophilic attack by ammonia to form a carbamate intermediate. The C-terminal ATP-grasp domain (referred to as the carbamoyl phosphate synthetic component) then catalyzes the phosphorylation of carbamate with the second ATP to form the end product carbamoyl phosphate. The reactive and unstable enzyme intermediates are sequentially channeled from one active site to the next through the interior of the protein over a distance of at least 96 A.</text>
</comment>
<comment type="similarity">
    <text evidence="1">Belongs to the CarB family.</text>
</comment>
<dbReference type="EC" id="6.3.4.16" evidence="1"/>
<dbReference type="EC" id="6.3.5.5" evidence="1"/>
<dbReference type="EMBL" id="CP000962">
    <property type="protein sequence ID" value="ACA54437.1"/>
    <property type="molecule type" value="Genomic_DNA"/>
</dbReference>
<dbReference type="RefSeq" id="WP_012342538.1">
    <property type="nucleotide sequence ID" value="NC_010520.1"/>
</dbReference>
<dbReference type="SMR" id="B1KT07"/>
<dbReference type="KEGG" id="cbl:CLK_1227"/>
<dbReference type="HOGENOM" id="CLU_000513_1_0_9"/>
<dbReference type="UniPathway" id="UPA00068">
    <property type="reaction ID" value="UER00171"/>
</dbReference>
<dbReference type="UniPathway" id="UPA00070">
    <property type="reaction ID" value="UER00115"/>
</dbReference>
<dbReference type="GO" id="GO:0005737">
    <property type="term" value="C:cytoplasm"/>
    <property type="evidence" value="ECO:0007669"/>
    <property type="project" value="TreeGrafter"/>
</dbReference>
<dbReference type="GO" id="GO:0005524">
    <property type="term" value="F:ATP binding"/>
    <property type="evidence" value="ECO:0007669"/>
    <property type="project" value="UniProtKB-UniRule"/>
</dbReference>
<dbReference type="GO" id="GO:0004087">
    <property type="term" value="F:carbamoyl-phosphate synthase (ammonia) activity"/>
    <property type="evidence" value="ECO:0007669"/>
    <property type="project" value="RHEA"/>
</dbReference>
<dbReference type="GO" id="GO:0004088">
    <property type="term" value="F:carbamoyl-phosphate synthase (glutamine-hydrolyzing) activity"/>
    <property type="evidence" value="ECO:0007669"/>
    <property type="project" value="UniProtKB-UniRule"/>
</dbReference>
<dbReference type="GO" id="GO:0046872">
    <property type="term" value="F:metal ion binding"/>
    <property type="evidence" value="ECO:0007669"/>
    <property type="project" value="UniProtKB-KW"/>
</dbReference>
<dbReference type="GO" id="GO:0044205">
    <property type="term" value="P:'de novo' UMP biosynthetic process"/>
    <property type="evidence" value="ECO:0007669"/>
    <property type="project" value="UniProtKB-UniRule"/>
</dbReference>
<dbReference type="GO" id="GO:0006541">
    <property type="term" value="P:glutamine metabolic process"/>
    <property type="evidence" value="ECO:0007669"/>
    <property type="project" value="TreeGrafter"/>
</dbReference>
<dbReference type="GO" id="GO:0006526">
    <property type="term" value="P:L-arginine biosynthetic process"/>
    <property type="evidence" value="ECO:0007669"/>
    <property type="project" value="UniProtKB-UniRule"/>
</dbReference>
<dbReference type="CDD" id="cd01424">
    <property type="entry name" value="MGS_CPS_II"/>
    <property type="match status" value="1"/>
</dbReference>
<dbReference type="FunFam" id="1.10.1030.10:FF:000002">
    <property type="entry name" value="Carbamoyl-phosphate synthase large chain"/>
    <property type="match status" value="1"/>
</dbReference>
<dbReference type="FunFam" id="3.30.470.20:FF:000001">
    <property type="entry name" value="Carbamoyl-phosphate synthase large chain"/>
    <property type="match status" value="1"/>
</dbReference>
<dbReference type="FunFam" id="3.30.470.20:FF:000026">
    <property type="entry name" value="Carbamoyl-phosphate synthase large chain"/>
    <property type="match status" value="1"/>
</dbReference>
<dbReference type="FunFam" id="3.40.50.20:FF:000001">
    <property type="entry name" value="Carbamoyl-phosphate synthase large chain"/>
    <property type="match status" value="1"/>
</dbReference>
<dbReference type="FunFam" id="3.40.50.20:FF:000002">
    <property type="entry name" value="Carbamoyl-phosphate synthase large chain"/>
    <property type="match status" value="1"/>
</dbReference>
<dbReference type="Gene3D" id="3.40.50.20">
    <property type="match status" value="2"/>
</dbReference>
<dbReference type="Gene3D" id="3.30.1490.20">
    <property type="entry name" value="ATP-grasp fold, A domain"/>
    <property type="match status" value="1"/>
</dbReference>
<dbReference type="Gene3D" id="3.30.470.20">
    <property type="entry name" value="ATP-grasp fold, B domain"/>
    <property type="match status" value="2"/>
</dbReference>
<dbReference type="Gene3D" id="1.10.1030.10">
    <property type="entry name" value="Carbamoyl-phosphate synthetase, large subunit oligomerisation domain"/>
    <property type="match status" value="1"/>
</dbReference>
<dbReference type="Gene3D" id="3.40.50.1380">
    <property type="entry name" value="Methylglyoxal synthase-like domain"/>
    <property type="match status" value="1"/>
</dbReference>
<dbReference type="HAMAP" id="MF_01210_A">
    <property type="entry name" value="CPSase_L_chain_A"/>
    <property type="match status" value="1"/>
</dbReference>
<dbReference type="HAMAP" id="MF_01210_B">
    <property type="entry name" value="CPSase_L_chain_B"/>
    <property type="match status" value="1"/>
</dbReference>
<dbReference type="InterPro" id="IPR011761">
    <property type="entry name" value="ATP-grasp"/>
</dbReference>
<dbReference type="InterPro" id="IPR013815">
    <property type="entry name" value="ATP_grasp_subdomain_1"/>
</dbReference>
<dbReference type="InterPro" id="IPR006275">
    <property type="entry name" value="CarbamoylP_synth_lsu"/>
</dbReference>
<dbReference type="InterPro" id="IPR005480">
    <property type="entry name" value="CarbamoylP_synth_lsu_oligo"/>
</dbReference>
<dbReference type="InterPro" id="IPR036897">
    <property type="entry name" value="CarbamoylP_synth_lsu_oligo_sf"/>
</dbReference>
<dbReference type="InterPro" id="IPR005479">
    <property type="entry name" value="CbamoylP_synth_lsu-like_ATP-bd"/>
</dbReference>
<dbReference type="InterPro" id="IPR005483">
    <property type="entry name" value="CbamoylP_synth_lsu_CPSase_dom"/>
</dbReference>
<dbReference type="InterPro" id="IPR011607">
    <property type="entry name" value="MGS-like_dom"/>
</dbReference>
<dbReference type="InterPro" id="IPR036914">
    <property type="entry name" value="MGS-like_dom_sf"/>
</dbReference>
<dbReference type="InterPro" id="IPR033937">
    <property type="entry name" value="MGS_CPS_CarB"/>
</dbReference>
<dbReference type="InterPro" id="IPR016185">
    <property type="entry name" value="PreATP-grasp_dom_sf"/>
</dbReference>
<dbReference type="NCBIfam" id="TIGR01369">
    <property type="entry name" value="CPSaseII_lrg"/>
    <property type="match status" value="1"/>
</dbReference>
<dbReference type="NCBIfam" id="NF003671">
    <property type="entry name" value="PRK05294.1"/>
    <property type="match status" value="1"/>
</dbReference>
<dbReference type="NCBIfam" id="NF009455">
    <property type="entry name" value="PRK12815.1"/>
    <property type="match status" value="1"/>
</dbReference>
<dbReference type="PANTHER" id="PTHR11405:SF53">
    <property type="entry name" value="CARBAMOYL-PHOSPHATE SYNTHASE [AMMONIA], MITOCHONDRIAL"/>
    <property type="match status" value="1"/>
</dbReference>
<dbReference type="PANTHER" id="PTHR11405">
    <property type="entry name" value="CARBAMOYLTRANSFERASE FAMILY MEMBER"/>
    <property type="match status" value="1"/>
</dbReference>
<dbReference type="Pfam" id="PF02786">
    <property type="entry name" value="CPSase_L_D2"/>
    <property type="match status" value="2"/>
</dbReference>
<dbReference type="Pfam" id="PF02787">
    <property type="entry name" value="CPSase_L_D3"/>
    <property type="match status" value="1"/>
</dbReference>
<dbReference type="Pfam" id="PF02142">
    <property type="entry name" value="MGS"/>
    <property type="match status" value="1"/>
</dbReference>
<dbReference type="PRINTS" id="PR00098">
    <property type="entry name" value="CPSASE"/>
</dbReference>
<dbReference type="SMART" id="SM01096">
    <property type="entry name" value="CPSase_L_D3"/>
    <property type="match status" value="1"/>
</dbReference>
<dbReference type="SMART" id="SM00851">
    <property type="entry name" value="MGS"/>
    <property type="match status" value="1"/>
</dbReference>
<dbReference type="SUPFAM" id="SSF48108">
    <property type="entry name" value="Carbamoyl phosphate synthetase, large subunit connection domain"/>
    <property type="match status" value="1"/>
</dbReference>
<dbReference type="SUPFAM" id="SSF56059">
    <property type="entry name" value="Glutathione synthetase ATP-binding domain-like"/>
    <property type="match status" value="2"/>
</dbReference>
<dbReference type="SUPFAM" id="SSF52335">
    <property type="entry name" value="Methylglyoxal synthase-like"/>
    <property type="match status" value="1"/>
</dbReference>
<dbReference type="SUPFAM" id="SSF52440">
    <property type="entry name" value="PreATP-grasp domain"/>
    <property type="match status" value="2"/>
</dbReference>
<dbReference type="PROSITE" id="PS50975">
    <property type="entry name" value="ATP_GRASP"/>
    <property type="match status" value="2"/>
</dbReference>
<dbReference type="PROSITE" id="PS00866">
    <property type="entry name" value="CPSASE_1"/>
    <property type="match status" value="2"/>
</dbReference>
<dbReference type="PROSITE" id="PS00867">
    <property type="entry name" value="CPSASE_2"/>
    <property type="match status" value="2"/>
</dbReference>
<dbReference type="PROSITE" id="PS51855">
    <property type="entry name" value="MGS"/>
    <property type="match status" value="1"/>
</dbReference>
<organism>
    <name type="scientific">Clostridium botulinum (strain Loch Maree / Type A3)</name>
    <dbReference type="NCBI Taxonomy" id="498214"/>
    <lineage>
        <taxon>Bacteria</taxon>
        <taxon>Bacillati</taxon>
        <taxon>Bacillota</taxon>
        <taxon>Clostridia</taxon>
        <taxon>Eubacteriales</taxon>
        <taxon>Clostridiaceae</taxon>
        <taxon>Clostridium</taxon>
    </lineage>
</organism>
<keyword id="KW-0028">Amino-acid biosynthesis</keyword>
<keyword id="KW-0055">Arginine biosynthesis</keyword>
<keyword id="KW-0067">ATP-binding</keyword>
<keyword id="KW-0436">Ligase</keyword>
<keyword id="KW-0460">Magnesium</keyword>
<keyword id="KW-0464">Manganese</keyword>
<keyword id="KW-0479">Metal-binding</keyword>
<keyword id="KW-0547">Nucleotide-binding</keyword>
<keyword id="KW-0665">Pyrimidine biosynthesis</keyword>
<keyword id="KW-0677">Repeat</keyword>
<accession>B1KT07</accession>
<name>CARB_CLOBM</name>
<feature type="chain" id="PRO_1000138888" description="Carbamoyl phosphate synthase large chain">
    <location>
        <begin position="1"/>
        <end position="1068"/>
    </location>
</feature>
<feature type="domain" description="ATP-grasp 1" evidence="1">
    <location>
        <begin position="133"/>
        <end position="327"/>
    </location>
</feature>
<feature type="domain" description="ATP-grasp 2" evidence="1">
    <location>
        <begin position="674"/>
        <end position="864"/>
    </location>
</feature>
<feature type="domain" description="MGS-like" evidence="1">
    <location>
        <begin position="933"/>
        <end position="1068"/>
    </location>
</feature>
<feature type="region of interest" description="Carboxyphosphate synthetic domain" evidence="1">
    <location>
        <begin position="1"/>
        <end position="401"/>
    </location>
</feature>
<feature type="region of interest" description="Oligomerization domain" evidence="1">
    <location>
        <begin position="402"/>
        <end position="549"/>
    </location>
</feature>
<feature type="region of interest" description="Carbamoyl phosphate synthetic domain" evidence="1">
    <location>
        <begin position="550"/>
        <end position="932"/>
    </location>
</feature>
<feature type="region of interest" description="Allosteric domain" evidence="1">
    <location>
        <begin position="933"/>
        <end position="1068"/>
    </location>
</feature>
<feature type="binding site" evidence="1">
    <location>
        <position position="129"/>
    </location>
    <ligand>
        <name>ATP</name>
        <dbReference type="ChEBI" id="CHEBI:30616"/>
        <label>1</label>
    </ligand>
</feature>
<feature type="binding site" evidence="1">
    <location>
        <position position="169"/>
    </location>
    <ligand>
        <name>ATP</name>
        <dbReference type="ChEBI" id="CHEBI:30616"/>
        <label>1</label>
    </ligand>
</feature>
<feature type="binding site" evidence="1">
    <location>
        <position position="175"/>
    </location>
    <ligand>
        <name>ATP</name>
        <dbReference type="ChEBI" id="CHEBI:30616"/>
        <label>1</label>
    </ligand>
</feature>
<feature type="binding site" evidence="1">
    <location>
        <position position="176"/>
    </location>
    <ligand>
        <name>ATP</name>
        <dbReference type="ChEBI" id="CHEBI:30616"/>
        <label>1</label>
    </ligand>
</feature>
<feature type="binding site" evidence="1">
    <location>
        <position position="208"/>
    </location>
    <ligand>
        <name>ATP</name>
        <dbReference type="ChEBI" id="CHEBI:30616"/>
        <label>1</label>
    </ligand>
</feature>
<feature type="binding site" evidence="1">
    <location>
        <position position="210"/>
    </location>
    <ligand>
        <name>ATP</name>
        <dbReference type="ChEBI" id="CHEBI:30616"/>
        <label>1</label>
    </ligand>
</feature>
<feature type="binding site" evidence="1">
    <location>
        <position position="215"/>
    </location>
    <ligand>
        <name>ATP</name>
        <dbReference type="ChEBI" id="CHEBI:30616"/>
        <label>1</label>
    </ligand>
</feature>
<feature type="binding site" evidence="1">
    <location>
        <position position="241"/>
    </location>
    <ligand>
        <name>ATP</name>
        <dbReference type="ChEBI" id="CHEBI:30616"/>
        <label>1</label>
    </ligand>
</feature>
<feature type="binding site" evidence="1">
    <location>
        <position position="242"/>
    </location>
    <ligand>
        <name>ATP</name>
        <dbReference type="ChEBI" id="CHEBI:30616"/>
        <label>1</label>
    </ligand>
</feature>
<feature type="binding site" evidence="1">
    <location>
        <position position="243"/>
    </location>
    <ligand>
        <name>ATP</name>
        <dbReference type="ChEBI" id="CHEBI:30616"/>
        <label>1</label>
    </ligand>
</feature>
<feature type="binding site" evidence="1">
    <location>
        <position position="284"/>
    </location>
    <ligand>
        <name>ATP</name>
        <dbReference type="ChEBI" id="CHEBI:30616"/>
        <label>1</label>
    </ligand>
</feature>
<feature type="binding site" evidence="1">
    <location>
        <position position="284"/>
    </location>
    <ligand>
        <name>Mg(2+)</name>
        <dbReference type="ChEBI" id="CHEBI:18420"/>
        <label>1</label>
    </ligand>
</feature>
<feature type="binding site" evidence="1">
    <location>
        <position position="284"/>
    </location>
    <ligand>
        <name>Mn(2+)</name>
        <dbReference type="ChEBI" id="CHEBI:29035"/>
        <label>1</label>
    </ligand>
</feature>
<feature type="binding site" evidence="1">
    <location>
        <position position="298"/>
    </location>
    <ligand>
        <name>ATP</name>
        <dbReference type="ChEBI" id="CHEBI:30616"/>
        <label>1</label>
    </ligand>
</feature>
<feature type="binding site" evidence="1">
    <location>
        <position position="298"/>
    </location>
    <ligand>
        <name>Mg(2+)</name>
        <dbReference type="ChEBI" id="CHEBI:18420"/>
        <label>1</label>
    </ligand>
</feature>
<feature type="binding site" evidence="1">
    <location>
        <position position="298"/>
    </location>
    <ligand>
        <name>Mg(2+)</name>
        <dbReference type="ChEBI" id="CHEBI:18420"/>
        <label>2</label>
    </ligand>
</feature>
<feature type="binding site" evidence="1">
    <location>
        <position position="298"/>
    </location>
    <ligand>
        <name>Mn(2+)</name>
        <dbReference type="ChEBI" id="CHEBI:29035"/>
        <label>1</label>
    </ligand>
</feature>
<feature type="binding site" evidence="1">
    <location>
        <position position="298"/>
    </location>
    <ligand>
        <name>Mn(2+)</name>
        <dbReference type="ChEBI" id="CHEBI:29035"/>
        <label>2</label>
    </ligand>
</feature>
<feature type="binding site" evidence="1">
    <location>
        <position position="300"/>
    </location>
    <ligand>
        <name>Mg(2+)</name>
        <dbReference type="ChEBI" id="CHEBI:18420"/>
        <label>2</label>
    </ligand>
</feature>
<feature type="binding site" evidence="1">
    <location>
        <position position="300"/>
    </location>
    <ligand>
        <name>Mn(2+)</name>
        <dbReference type="ChEBI" id="CHEBI:29035"/>
        <label>2</label>
    </ligand>
</feature>
<feature type="binding site" evidence="1">
    <location>
        <position position="710"/>
    </location>
    <ligand>
        <name>ATP</name>
        <dbReference type="ChEBI" id="CHEBI:30616"/>
        <label>2</label>
    </ligand>
</feature>
<feature type="binding site" evidence="1">
    <location>
        <position position="749"/>
    </location>
    <ligand>
        <name>ATP</name>
        <dbReference type="ChEBI" id="CHEBI:30616"/>
        <label>2</label>
    </ligand>
</feature>
<feature type="binding site" evidence="1">
    <location>
        <position position="751"/>
    </location>
    <ligand>
        <name>ATP</name>
        <dbReference type="ChEBI" id="CHEBI:30616"/>
        <label>2</label>
    </ligand>
</feature>
<feature type="binding site" evidence="1">
    <location>
        <position position="755"/>
    </location>
    <ligand>
        <name>ATP</name>
        <dbReference type="ChEBI" id="CHEBI:30616"/>
        <label>2</label>
    </ligand>
</feature>
<feature type="binding site" evidence="1">
    <location>
        <position position="780"/>
    </location>
    <ligand>
        <name>ATP</name>
        <dbReference type="ChEBI" id="CHEBI:30616"/>
        <label>2</label>
    </ligand>
</feature>
<feature type="binding site" evidence="1">
    <location>
        <position position="781"/>
    </location>
    <ligand>
        <name>ATP</name>
        <dbReference type="ChEBI" id="CHEBI:30616"/>
        <label>2</label>
    </ligand>
</feature>
<feature type="binding site" evidence="1">
    <location>
        <position position="782"/>
    </location>
    <ligand>
        <name>ATP</name>
        <dbReference type="ChEBI" id="CHEBI:30616"/>
        <label>2</label>
    </ligand>
</feature>
<feature type="binding site" evidence="1">
    <location>
        <position position="783"/>
    </location>
    <ligand>
        <name>ATP</name>
        <dbReference type="ChEBI" id="CHEBI:30616"/>
        <label>2</label>
    </ligand>
</feature>
<feature type="binding site" evidence="1">
    <location>
        <position position="823"/>
    </location>
    <ligand>
        <name>ATP</name>
        <dbReference type="ChEBI" id="CHEBI:30616"/>
        <label>2</label>
    </ligand>
</feature>
<feature type="binding site" evidence="1">
    <location>
        <position position="823"/>
    </location>
    <ligand>
        <name>Mg(2+)</name>
        <dbReference type="ChEBI" id="CHEBI:18420"/>
        <label>3</label>
    </ligand>
</feature>
<feature type="binding site" evidence="1">
    <location>
        <position position="823"/>
    </location>
    <ligand>
        <name>Mn(2+)</name>
        <dbReference type="ChEBI" id="CHEBI:29035"/>
        <label>3</label>
    </ligand>
</feature>
<feature type="binding site" evidence="1">
    <location>
        <position position="835"/>
    </location>
    <ligand>
        <name>ATP</name>
        <dbReference type="ChEBI" id="CHEBI:30616"/>
        <label>2</label>
    </ligand>
</feature>
<feature type="binding site" evidence="1">
    <location>
        <position position="835"/>
    </location>
    <ligand>
        <name>Mg(2+)</name>
        <dbReference type="ChEBI" id="CHEBI:18420"/>
        <label>3</label>
    </ligand>
</feature>
<feature type="binding site" evidence="1">
    <location>
        <position position="835"/>
    </location>
    <ligand>
        <name>Mg(2+)</name>
        <dbReference type="ChEBI" id="CHEBI:18420"/>
        <label>4</label>
    </ligand>
</feature>
<feature type="binding site" evidence="1">
    <location>
        <position position="835"/>
    </location>
    <ligand>
        <name>Mn(2+)</name>
        <dbReference type="ChEBI" id="CHEBI:29035"/>
        <label>3</label>
    </ligand>
</feature>
<feature type="binding site" evidence="1">
    <location>
        <position position="835"/>
    </location>
    <ligand>
        <name>Mn(2+)</name>
        <dbReference type="ChEBI" id="CHEBI:29035"/>
        <label>4</label>
    </ligand>
</feature>
<feature type="binding site" evidence="1">
    <location>
        <position position="837"/>
    </location>
    <ligand>
        <name>Mg(2+)</name>
        <dbReference type="ChEBI" id="CHEBI:18420"/>
        <label>4</label>
    </ligand>
</feature>
<feature type="binding site" evidence="1">
    <location>
        <position position="837"/>
    </location>
    <ligand>
        <name>Mn(2+)</name>
        <dbReference type="ChEBI" id="CHEBI:29035"/>
        <label>4</label>
    </ligand>
</feature>
<reference key="1">
    <citation type="journal article" date="2007" name="PLoS ONE">
        <title>Analysis of the neurotoxin complex genes in Clostridium botulinum A1-A4 and B1 strains: BoNT/A3, /Ba4 and /B1 clusters are located within plasmids.</title>
        <authorList>
            <person name="Smith T.J."/>
            <person name="Hill K.K."/>
            <person name="Foley B.T."/>
            <person name="Detter J.C."/>
            <person name="Munk A.C."/>
            <person name="Bruce D.C."/>
            <person name="Doggett N.A."/>
            <person name="Smith L.A."/>
            <person name="Marks J.D."/>
            <person name="Xie G."/>
            <person name="Brettin T.S."/>
        </authorList>
    </citation>
    <scope>NUCLEOTIDE SEQUENCE [LARGE SCALE GENOMIC DNA]</scope>
    <source>
        <strain>Loch Maree / Type A3</strain>
    </source>
</reference>
<evidence type="ECO:0000255" key="1">
    <source>
        <dbReference type="HAMAP-Rule" id="MF_01210"/>
    </source>
</evidence>
<sequence length="1068" mass="118928">MPLNKDIKKVLVIGSGPIVIGQAAEFDYSGTQACEGVKEEGVEVVLINSNPATIMTDKEVADKVYLEPLTVEFVEKVIAKERPDSLLAGMGGQTGLNLAVELYDKGILKKCGVNVIGTSIESIKEGEDRELFRNVMSRINEPVIQSEIVTDIENGKAFANKIGYPVIVRPAYTLGGTGGGIAESEEELDEILALGLQVSSIGQVLLEKSVKGWKEIEYEVMRDSRGNCVTVCNMENIDPVGIHTGDSIVVAPSQTLSDKEYQMLRSASINIINSIGIKGGCNVQFALNPNSFEYAVIEINPRVSRSSALASKATGYPIAKVAAKIALGYTLDEIKNAVTQKTYACFEPSLDYVVVKIPKWPFDKFQGADRVLGTKMMATGEIMAIGSNFEAAFLKGIRSLEIGKYSLEHKKFREFSMEELKTRVISPDDERIFALAEMLRRDYRMDKVAEITGIDKFFIKKFRWIVEEEQRLILSKIDDLDKEWLYKLKKKGFSDKGIADMLNISPEDIYKLRNIWGINPVYKMVDTCGGEFEALSPYYYSTYDVYDEVEVSKNKKVIVIGSGPIRIGQGIEFDYASVHCVKALKKLGIETIIVNNNPETVSTDFDVSDKLYFEPLTEEDVLNIVEKEKPNGIILQFGGQTAIKLAKFLKEKNIPILGTTAGQIDMAEDREKFDELLEKLQISRPKGKGIWSVEDGLEETKKLGFPVLVRPSYVLGGQGMEITHDEKELVYYLSNAFQKNKKNPILIDKYLMGREIEVDAISDGEDVLIPGIMEHLERAGVHSGDSITMYPTQNVSKDIKEKILEYTKKLALGIGIKGMINIQFIEFEGNLYVIEVNPRASRTVPYISKVSKVPIVDIATRVMLGEKLNDLGYRVGVYKEPELISVKVPVFSTQKLPRVEVCLGPEMKSTGEVLGVGKTLEEALYKGFIGANMSIKKEKGTILATINDHDKEEFLPIAKKLHSIGYKFIATSKTAELLKEEGIEVKQVRKLKEESPNIIDTIKNDEVDLVINTPTKGNDSKRDGFHIRRAAIERNLGVITSLDTLKAIVNIKSKEIKDETLHIFDLSN</sequence>